<gene>
    <name type="primary">rev</name>
</gene>
<organism>
    <name type="scientific">Human immunodeficiency virus type 2 subtype A (isolate D194)</name>
    <name type="common">HIV-2</name>
    <dbReference type="NCBI Taxonomy" id="11713"/>
    <lineage>
        <taxon>Viruses</taxon>
        <taxon>Riboviria</taxon>
        <taxon>Pararnavirae</taxon>
        <taxon>Artverviricota</taxon>
        <taxon>Revtraviricetes</taxon>
        <taxon>Ortervirales</taxon>
        <taxon>Retroviridae</taxon>
        <taxon>Orthoretrovirinae</taxon>
        <taxon>Lentivirus</taxon>
        <taxon>Human immunodeficiency virus 2</taxon>
    </lineage>
</organism>
<accession>P17754</accession>
<name>REV_HV2D1</name>
<organismHost>
    <name type="scientific">Homo sapiens</name>
    <name type="common">Human</name>
    <dbReference type="NCBI Taxonomy" id="9606"/>
</organismHost>
<dbReference type="EMBL" id="J04542">
    <property type="protein sequence ID" value="AAA76846.1"/>
    <property type="molecule type" value="Genomic_DNA"/>
</dbReference>
<dbReference type="EMBL" id="X52223">
    <property type="protein sequence ID" value="CAA36470.1"/>
    <property type="molecule type" value="Genomic_DNA"/>
</dbReference>
<dbReference type="PIR" id="S12158">
    <property type="entry name" value="S12158"/>
</dbReference>
<dbReference type="SMR" id="P17754"/>
<dbReference type="Proteomes" id="UP000007422">
    <property type="component" value="Segment"/>
</dbReference>
<dbReference type="GO" id="GO:0030430">
    <property type="term" value="C:host cell cytoplasm"/>
    <property type="evidence" value="ECO:0007669"/>
    <property type="project" value="UniProtKB-SubCell"/>
</dbReference>
<dbReference type="GO" id="GO:0044196">
    <property type="term" value="C:host cell nucleolus"/>
    <property type="evidence" value="ECO:0007669"/>
    <property type="project" value="UniProtKB-SubCell"/>
</dbReference>
<dbReference type="GO" id="GO:0003700">
    <property type="term" value="F:DNA-binding transcription factor activity"/>
    <property type="evidence" value="ECO:0007669"/>
    <property type="project" value="InterPro"/>
</dbReference>
<dbReference type="GO" id="GO:0003723">
    <property type="term" value="F:RNA binding"/>
    <property type="evidence" value="ECO:0007669"/>
    <property type="project" value="UniProtKB-KW"/>
</dbReference>
<dbReference type="GO" id="GO:0051028">
    <property type="term" value="P:mRNA transport"/>
    <property type="evidence" value="ECO:0007669"/>
    <property type="project" value="UniProtKB-KW"/>
</dbReference>
<dbReference type="Gene3D" id="6.10.140.630">
    <property type="match status" value="1"/>
</dbReference>
<dbReference type="InterPro" id="IPR000625">
    <property type="entry name" value="REV_protein"/>
</dbReference>
<dbReference type="Pfam" id="PF00424">
    <property type="entry name" value="REV"/>
    <property type="match status" value="1"/>
</dbReference>
<feature type="chain" id="PRO_0000085281" description="Protein Rev">
    <location>
        <begin position="1"/>
        <end position="103"/>
    </location>
</feature>
<feature type="region of interest" description="Homomultimerization" evidence="1">
    <location>
        <begin position="16"/>
        <end position="24"/>
    </location>
</feature>
<feature type="region of interest" description="Disordered" evidence="2">
    <location>
        <begin position="80"/>
        <end position="103"/>
    </location>
</feature>
<feature type="short sequence motif" description="Nuclear localization signal and RNA-binding (RRE)" evidence="1">
    <location>
        <begin position="35"/>
        <end position="49"/>
    </location>
</feature>
<feature type="short sequence motif" description="Nuclear export signal and binding to XPO1" evidence="1">
    <location>
        <begin position="71"/>
        <end position="82"/>
    </location>
</feature>
<feature type="compositionally biased region" description="Polar residues" evidence="2">
    <location>
        <begin position="92"/>
        <end position="103"/>
    </location>
</feature>
<protein>
    <recommendedName>
        <fullName>Protein Rev</fullName>
    </recommendedName>
    <alternativeName>
        <fullName>Regulator of expression of viral proteins</fullName>
    </alternativeName>
</protein>
<proteinExistence type="inferred from homology"/>
<keyword id="KW-0014">AIDS</keyword>
<keyword id="KW-1035">Host cytoplasm</keyword>
<keyword id="KW-1048">Host nucleus</keyword>
<keyword id="KW-0509">mRNA transport</keyword>
<keyword id="KW-0694">RNA-binding</keyword>
<keyword id="KW-0813">Transport</keyword>
<comment type="function">
    <text evidence="1">Escorts unspliced or incompletely spliced viral pre-mRNAs (late transcripts) out of the nucleus of infected cells. These pre-mRNAs carry a recognition sequence called Rev responsive element (RRE) located in the env gene, that is not present in fully spliced viral mRNAs (early transcripts). This function is essential since most viral proteins are translated from unspliced or partially spliced pre-mRNAs which cannot exit the nucleus by the pathway used by fully processed cellular mRNAs (By similarity).</text>
</comment>
<comment type="subunit">
    <text evidence="1">Homomultimer; when bound to the RRE. Multimeric assembly is essential for activity (By similarity).</text>
</comment>
<comment type="subcellular location">
    <subcellularLocation>
        <location>Host nucleus</location>
        <location>Host nucleolus</location>
    </subcellularLocation>
    <subcellularLocation>
        <location>Host cytoplasm</location>
    </subcellularLocation>
    <text evidence="1">The presence of both nuclear import and nuclear export signals leads to continuous shuttling between the nucleus and cytoplasm.</text>
</comment>
<comment type="domain">
    <text evidence="1">The RNA-binding motif binds to the RRE, a stem-and-loop structure present in incompletely spliced viral pre-mRNAs. This region also contains the NLS which mediates nuclear localization. These overlapping functions prevent Rev bound to RRE from undesirable return to the nucleus. When Rev binds the RRE, the NLS becomes masked while the NES remains accessible (By similarity).</text>
</comment>
<comment type="miscellaneous">
    <text>This isolate is from a Gambian case of 'neuro-AIDS'.</text>
</comment>
<reference key="1">
    <citation type="journal article" date="1989" name="Proc. Natl. Acad. Sci. U.S.A.">
        <title>Molecular cloning of two west African human immunodeficiency virus type 2 isolates that replicate well in macrophages: a Gambian isolate, from a patient with neurologic acquired immunodeficiency syndrome, and a highly divergent Ghanian isolate.</title>
        <authorList>
            <person name="Kuehnel H."/>
            <person name="von Briesen H."/>
            <person name="Dietrich U."/>
            <person name="Adamski M."/>
            <person name="Mix D."/>
            <person name="Biesert L."/>
            <person name="Kreutz R."/>
            <person name="Immelmann A."/>
            <person name="Henco K."/>
            <person name="Meichsner C."/>
            <person name="Andreesen R."/>
            <person name="Gelderblom H."/>
            <person name="Ruebsamen-Waigmann H."/>
        </authorList>
    </citation>
    <scope>NUCLEOTIDE SEQUENCE [GENOMIC DNA]</scope>
</reference>
<reference key="2">
    <citation type="journal article" date="1990" name="Nucleic Acids Res.">
        <title>Nucleotide sequence of HIV-2D194, an isolate from a Gambian case of 'neuro-AIDS', which showed excellent growth in macrophages.</title>
        <authorList>
            <person name="Kuehnel H."/>
            <person name="Kreutz R."/>
            <person name="Ruebsamen-Waigmann H."/>
        </authorList>
    </citation>
    <scope>NUCLEOTIDE SEQUENCE [GENOMIC DNA]</scope>
</reference>
<evidence type="ECO:0000250" key="1"/>
<evidence type="ECO:0000256" key="2">
    <source>
        <dbReference type="SAM" id="MobiDB-lite"/>
    </source>
</evidence>
<sequence length="103" mass="11963">MRDRADEEGLQEKLRLIRLLHQINPYPHGQGTASQRRNRRRRRRRQWFRLVALATKLHTIPDPPTDSPLDRAIQQLQGLTIQELPDPPTDLPESNSNQGLAET</sequence>